<accession>Q9LQZ2</accession>
<accession>Q680G5</accession>
<proteinExistence type="evidence at transcript level"/>
<name>DRE2D_ARATH</name>
<organism>
    <name type="scientific">Arabidopsis thaliana</name>
    <name type="common">Mouse-ear cress</name>
    <dbReference type="NCBI Taxonomy" id="3702"/>
    <lineage>
        <taxon>Eukaryota</taxon>
        <taxon>Viridiplantae</taxon>
        <taxon>Streptophyta</taxon>
        <taxon>Embryophyta</taxon>
        <taxon>Tracheophyta</taxon>
        <taxon>Spermatophyta</taxon>
        <taxon>Magnoliopsida</taxon>
        <taxon>eudicotyledons</taxon>
        <taxon>Gunneridae</taxon>
        <taxon>Pentapetalae</taxon>
        <taxon>rosids</taxon>
        <taxon>malvids</taxon>
        <taxon>Brassicales</taxon>
        <taxon>Brassicaceae</taxon>
        <taxon>Camelineae</taxon>
        <taxon>Arabidopsis</taxon>
    </lineage>
</organism>
<dbReference type="EMBL" id="AC006434">
    <property type="protein sequence ID" value="AAF87124.1"/>
    <property type="molecule type" value="Genomic_DNA"/>
</dbReference>
<dbReference type="EMBL" id="CP002684">
    <property type="protein sequence ID" value="AEE35725.1"/>
    <property type="molecule type" value="Genomic_DNA"/>
</dbReference>
<dbReference type="EMBL" id="AK175902">
    <property type="protein sequence ID" value="BAD43665.1"/>
    <property type="molecule type" value="mRNA"/>
</dbReference>
<dbReference type="RefSeq" id="NP_177681.2">
    <property type="nucleotide sequence ID" value="NM_106202.3"/>
</dbReference>
<dbReference type="SMR" id="Q9LQZ2"/>
<dbReference type="BioGRID" id="29104">
    <property type="interactions" value="3"/>
</dbReference>
<dbReference type="FunCoup" id="Q9LQZ2">
    <property type="interactions" value="24"/>
</dbReference>
<dbReference type="IntAct" id="Q9LQZ2">
    <property type="interactions" value="1"/>
</dbReference>
<dbReference type="STRING" id="3702.Q9LQZ2"/>
<dbReference type="PaxDb" id="3702-AT1G75490.1"/>
<dbReference type="ProteomicsDB" id="242295"/>
<dbReference type="EnsemblPlants" id="AT1G75490.1">
    <property type="protein sequence ID" value="AT1G75490.1"/>
    <property type="gene ID" value="AT1G75490"/>
</dbReference>
<dbReference type="GeneID" id="843885"/>
<dbReference type="Gramene" id="AT1G75490.1">
    <property type="protein sequence ID" value="AT1G75490.1"/>
    <property type="gene ID" value="AT1G75490"/>
</dbReference>
<dbReference type="KEGG" id="ath:AT1G75490"/>
<dbReference type="Araport" id="AT1G75490"/>
<dbReference type="TAIR" id="AT1G75490"/>
<dbReference type="eggNOG" id="ENOG502RYIB">
    <property type="taxonomic scope" value="Eukaryota"/>
</dbReference>
<dbReference type="HOGENOM" id="CLU_046486_2_0_1"/>
<dbReference type="InParanoid" id="Q9LQZ2"/>
<dbReference type="OMA" id="ISWEHIN"/>
<dbReference type="OrthoDB" id="550883at2759"/>
<dbReference type="PhylomeDB" id="Q9LQZ2"/>
<dbReference type="PRO" id="PR:Q9LQZ2"/>
<dbReference type="Proteomes" id="UP000006548">
    <property type="component" value="Chromosome 1"/>
</dbReference>
<dbReference type="ExpressionAtlas" id="Q9LQZ2">
    <property type="expression patterns" value="baseline and differential"/>
</dbReference>
<dbReference type="GO" id="GO:0005634">
    <property type="term" value="C:nucleus"/>
    <property type="evidence" value="ECO:0007669"/>
    <property type="project" value="UniProtKB-SubCell"/>
</dbReference>
<dbReference type="GO" id="GO:0003700">
    <property type="term" value="F:DNA-binding transcription factor activity"/>
    <property type="evidence" value="ECO:0000250"/>
    <property type="project" value="TAIR"/>
</dbReference>
<dbReference type="GO" id="GO:0000976">
    <property type="term" value="F:transcription cis-regulatory region binding"/>
    <property type="evidence" value="ECO:0000353"/>
    <property type="project" value="TAIR"/>
</dbReference>
<dbReference type="CDD" id="cd00018">
    <property type="entry name" value="AP2"/>
    <property type="match status" value="1"/>
</dbReference>
<dbReference type="FunFam" id="3.30.730.10:FF:000001">
    <property type="entry name" value="Ethylene-responsive transcription factor 2"/>
    <property type="match status" value="1"/>
</dbReference>
<dbReference type="Gene3D" id="3.30.730.10">
    <property type="entry name" value="AP2/ERF domain"/>
    <property type="match status" value="1"/>
</dbReference>
<dbReference type="InterPro" id="IPR001471">
    <property type="entry name" value="AP2/ERF_dom"/>
</dbReference>
<dbReference type="InterPro" id="IPR036955">
    <property type="entry name" value="AP2/ERF_dom_sf"/>
</dbReference>
<dbReference type="InterPro" id="IPR016177">
    <property type="entry name" value="DNA-bd_dom_sf"/>
</dbReference>
<dbReference type="PANTHER" id="PTHR31241">
    <property type="entry name" value="DEHYDRATION-RESPONSIVE ELEMENT-BINDING PROTEIN 2C"/>
    <property type="match status" value="1"/>
</dbReference>
<dbReference type="PANTHER" id="PTHR31241:SF62">
    <property type="entry name" value="DEHYDRATION-RESPONSIVE ELEMENT-BINDING PROTEIN 2D"/>
    <property type="match status" value="1"/>
</dbReference>
<dbReference type="Pfam" id="PF00847">
    <property type="entry name" value="AP2"/>
    <property type="match status" value="1"/>
</dbReference>
<dbReference type="PRINTS" id="PR00367">
    <property type="entry name" value="ETHRSPELEMNT"/>
</dbReference>
<dbReference type="SMART" id="SM00380">
    <property type="entry name" value="AP2"/>
    <property type="match status" value="1"/>
</dbReference>
<dbReference type="SUPFAM" id="SSF54171">
    <property type="entry name" value="DNA-binding domain"/>
    <property type="match status" value="1"/>
</dbReference>
<dbReference type="PROSITE" id="PS51032">
    <property type="entry name" value="AP2_ERF"/>
    <property type="match status" value="1"/>
</dbReference>
<protein>
    <recommendedName>
        <fullName>Dehydration-responsive element-binding protein 2D</fullName>
        <shortName>Protein DREB2D</shortName>
    </recommendedName>
</protein>
<reference key="1">
    <citation type="journal article" date="2000" name="Nature">
        <title>Sequence and analysis of chromosome 1 of the plant Arabidopsis thaliana.</title>
        <authorList>
            <person name="Theologis A."/>
            <person name="Ecker J.R."/>
            <person name="Palm C.J."/>
            <person name="Federspiel N.A."/>
            <person name="Kaul S."/>
            <person name="White O."/>
            <person name="Alonso J."/>
            <person name="Altafi H."/>
            <person name="Araujo R."/>
            <person name="Bowman C.L."/>
            <person name="Brooks S.Y."/>
            <person name="Buehler E."/>
            <person name="Chan A."/>
            <person name="Chao Q."/>
            <person name="Chen H."/>
            <person name="Cheuk R.F."/>
            <person name="Chin C.W."/>
            <person name="Chung M.K."/>
            <person name="Conn L."/>
            <person name="Conway A.B."/>
            <person name="Conway A.R."/>
            <person name="Creasy T.H."/>
            <person name="Dewar K."/>
            <person name="Dunn P."/>
            <person name="Etgu P."/>
            <person name="Feldblyum T.V."/>
            <person name="Feng J.-D."/>
            <person name="Fong B."/>
            <person name="Fujii C.Y."/>
            <person name="Gill J.E."/>
            <person name="Goldsmith A.D."/>
            <person name="Haas B."/>
            <person name="Hansen N.F."/>
            <person name="Hughes B."/>
            <person name="Huizar L."/>
            <person name="Hunter J.L."/>
            <person name="Jenkins J."/>
            <person name="Johnson-Hopson C."/>
            <person name="Khan S."/>
            <person name="Khaykin E."/>
            <person name="Kim C.J."/>
            <person name="Koo H.L."/>
            <person name="Kremenetskaia I."/>
            <person name="Kurtz D.B."/>
            <person name="Kwan A."/>
            <person name="Lam B."/>
            <person name="Langin-Hooper S."/>
            <person name="Lee A."/>
            <person name="Lee J.M."/>
            <person name="Lenz C.A."/>
            <person name="Li J.H."/>
            <person name="Li Y.-P."/>
            <person name="Lin X."/>
            <person name="Liu S.X."/>
            <person name="Liu Z.A."/>
            <person name="Luros J.S."/>
            <person name="Maiti R."/>
            <person name="Marziali A."/>
            <person name="Militscher J."/>
            <person name="Miranda M."/>
            <person name="Nguyen M."/>
            <person name="Nierman W.C."/>
            <person name="Osborne B.I."/>
            <person name="Pai G."/>
            <person name="Peterson J."/>
            <person name="Pham P.K."/>
            <person name="Rizzo M."/>
            <person name="Rooney T."/>
            <person name="Rowley D."/>
            <person name="Sakano H."/>
            <person name="Salzberg S.L."/>
            <person name="Schwartz J.R."/>
            <person name="Shinn P."/>
            <person name="Southwick A.M."/>
            <person name="Sun H."/>
            <person name="Tallon L.J."/>
            <person name="Tambunga G."/>
            <person name="Toriumi M.J."/>
            <person name="Town C.D."/>
            <person name="Utterback T."/>
            <person name="Van Aken S."/>
            <person name="Vaysberg M."/>
            <person name="Vysotskaia V.S."/>
            <person name="Walker M."/>
            <person name="Wu D."/>
            <person name="Yu G."/>
            <person name="Fraser C.M."/>
            <person name="Venter J.C."/>
            <person name="Davis R.W."/>
        </authorList>
    </citation>
    <scope>NUCLEOTIDE SEQUENCE [LARGE SCALE GENOMIC DNA]</scope>
    <source>
        <strain>cv. Columbia</strain>
    </source>
</reference>
<reference key="2">
    <citation type="journal article" date="2017" name="Plant J.">
        <title>Araport11: a complete reannotation of the Arabidopsis thaliana reference genome.</title>
        <authorList>
            <person name="Cheng C.Y."/>
            <person name="Krishnakumar V."/>
            <person name="Chan A.P."/>
            <person name="Thibaud-Nissen F."/>
            <person name="Schobel S."/>
            <person name="Town C.D."/>
        </authorList>
    </citation>
    <scope>GENOME REANNOTATION</scope>
    <source>
        <strain>cv. Columbia</strain>
    </source>
</reference>
<reference key="3">
    <citation type="submission" date="2004-09" db="EMBL/GenBank/DDBJ databases">
        <title>Large-scale analysis of RIKEN Arabidopsis full-length (RAFL) cDNAs.</title>
        <authorList>
            <person name="Totoki Y."/>
            <person name="Seki M."/>
            <person name="Ishida J."/>
            <person name="Nakajima M."/>
            <person name="Enju A."/>
            <person name="Kamiya A."/>
            <person name="Narusaka M."/>
            <person name="Shin-i T."/>
            <person name="Nakagawa M."/>
            <person name="Sakamoto N."/>
            <person name="Oishi K."/>
            <person name="Kohara Y."/>
            <person name="Kobayashi M."/>
            <person name="Toyoda A."/>
            <person name="Sakaki Y."/>
            <person name="Sakurai T."/>
            <person name="Iida K."/>
            <person name="Akiyama K."/>
            <person name="Satou M."/>
            <person name="Toyoda T."/>
            <person name="Konagaya A."/>
            <person name="Carninci P."/>
            <person name="Kawai J."/>
            <person name="Hayashizaki Y."/>
            <person name="Shinozaki K."/>
        </authorList>
    </citation>
    <scope>NUCLEOTIDE SEQUENCE [LARGE SCALE MRNA]</scope>
    <source>
        <strain>cv. Columbia</strain>
    </source>
</reference>
<reference key="4">
    <citation type="journal article" date="2002" name="Biochem. Biophys. Res. Commun.">
        <title>DNA-binding specificity of the ERF/AP2 domain of Arabidopsis DREBs, transcription factors involved in dehydration- and cold-inducible gene expression.</title>
        <authorList>
            <person name="Sakuma Y."/>
            <person name="Liu Q."/>
            <person name="Dubouzet J.G."/>
            <person name="Abe H."/>
            <person name="Shinozaki K."/>
            <person name="Yamaguchi-Shinozaki K."/>
        </authorList>
    </citation>
    <scope>GENE FAMILY</scope>
    <scope>FUNCTION</scope>
    <scope>INDUCTION</scope>
</reference>
<reference key="5">
    <citation type="journal article" date="2006" name="Plant Physiol.">
        <title>Genome-wide analysis of the ERF gene family in Arabidopsis and rice.</title>
        <authorList>
            <person name="Nakano T."/>
            <person name="Suzuki K."/>
            <person name="Fujimura T."/>
            <person name="Shinshi H."/>
        </authorList>
    </citation>
    <scope>GENE FAMILY</scope>
    <scope>NOMENCLATURE</scope>
</reference>
<comment type="function">
    <text evidence="3">Putative transcriptional activator that binds specifically to the DNA sequence 5'-[AG]CCGAC-3'. Binding to the C-repeat/DRE element mediates high salinity-inducible transcription.</text>
</comment>
<comment type="subcellular location">
    <subcellularLocation>
        <location evidence="4">Nucleus</location>
    </subcellularLocation>
</comment>
<comment type="induction">
    <text evidence="3">By high-salt stress.</text>
</comment>
<comment type="similarity">
    <text evidence="4">Belongs to the AP2/ERF transcription factor family. ERF subfamily.</text>
</comment>
<evidence type="ECO:0000255" key="1">
    <source>
        <dbReference type="PROSITE-ProRule" id="PRU00366"/>
    </source>
</evidence>
<evidence type="ECO:0000256" key="2">
    <source>
        <dbReference type="SAM" id="MobiDB-lite"/>
    </source>
</evidence>
<evidence type="ECO:0000269" key="3">
    <source>
    </source>
</evidence>
<evidence type="ECO:0000305" key="4"/>
<keyword id="KW-0010">Activator</keyword>
<keyword id="KW-0238">DNA-binding</keyword>
<keyword id="KW-0539">Nucleus</keyword>
<keyword id="KW-1185">Reference proteome</keyword>
<keyword id="KW-0346">Stress response</keyword>
<keyword id="KW-0804">Transcription</keyword>
<keyword id="KW-0805">Transcription regulation</keyword>
<gene>
    <name type="primary">DREB2D</name>
    <name type="synonym">ERF049</name>
    <name type="ordered locus">At1g75490</name>
    <name type="ORF">F10A5.29</name>
</gene>
<sequence>MSSIEPKVMMVGANKKQRTVQASSRKGCMRGKGGPDNASCTYKGVRQRTWGKWVAEIREPNRGARLWLGTFDTSREAALAYDSAARKLYGPEAHLNLPESLRSYPKTASSPASQTTPSSNTGGKSSSDSESPCSSNEMSSCGRVTEEISWEHINVDLPVMDDSSIWEEATMSLGFPWVHEGDNDISRFDTCISGGYSNWDSFHSPL</sequence>
<feature type="chain" id="PRO_0000112537" description="Dehydration-responsive element-binding protein 2D">
    <location>
        <begin position="1"/>
        <end position="206"/>
    </location>
</feature>
<feature type="DNA-binding region" description="AP2/ERF" evidence="1">
    <location>
        <begin position="41"/>
        <end position="98"/>
    </location>
</feature>
<feature type="region of interest" description="Disordered" evidence="2">
    <location>
        <begin position="13"/>
        <end position="40"/>
    </location>
</feature>
<feature type="region of interest" description="Disordered" evidence="2">
    <location>
        <begin position="102"/>
        <end position="139"/>
    </location>
</feature>
<feature type="compositionally biased region" description="Low complexity" evidence="2">
    <location>
        <begin position="107"/>
        <end position="139"/>
    </location>
</feature>